<proteinExistence type="evidence at protein level"/>
<gene>
    <name type="primary">Il31ra</name>
    <name type="synonym">Glmr</name>
</gene>
<comment type="function">
    <text evidence="6 8 9">Associates with OSMR to form the interleukin-31 receptor which activates STAT3 and to a lower extent STAT1 and STAT5. May function in skin immunity (PubMed:15184896). Mediates IL31-induced itch, probably in a manner dependent on cation channels TRPA1 and TRPV1 (PubMed:24373353). Positively regulates numbers and cycling status of immature subsets of myeloid progenitor cells in bone marrow in vivo and enhances myeloid progenitor cell survival in vitro (PubMed:17379091).</text>
</comment>
<comment type="subunit">
    <text evidence="2">Heterodimer with OSMR. Interacts with JAK1 and STAT3.</text>
</comment>
<comment type="subcellular location">
    <subcellularLocation>
        <location evidence="11">Cell membrane</location>
        <topology evidence="15">Single-pass type I membrane protein</topology>
    </subcellularLocation>
    <subcellularLocation>
        <location evidence="10">Presynaptic cell membrane</location>
    </subcellularLocation>
    <subcellularLocation>
        <location evidence="10">Cell projection</location>
        <location evidence="10">Axon</location>
    </subcellularLocation>
</comment>
<comment type="alternative products">
    <event type="alternative splicing"/>
    <isoform>
        <id>Q8K5B1-1</id>
        <name>1</name>
        <sequence type="displayed"/>
    </isoform>
    <isoform>
        <id>Q8K5B1-2</id>
        <name>2</name>
        <name>muZcytoR17x1</name>
        <sequence type="described" ref="VSP_022815 VSP_022821 VSP_022822"/>
    </isoform>
    <isoform>
        <id>Q8K5B1-3</id>
        <name>3</name>
        <name>muZcytoR17x2</name>
        <sequence type="described" ref="VSP_022815 VSP_022819 VSP_022820"/>
    </isoform>
    <isoform>
        <id>Q8K5B1-4</id>
        <name>4</name>
        <sequence type="described" ref="VSP_022816 VSP_022817 VSP_022818"/>
    </isoform>
    <isoform>
        <id>Q8K5B1-5</id>
        <name>5</name>
        <sequence type="described" ref="VSP_022814"/>
    </isoform>
</comment>
<comment type="tissue specificity">
    <text evidence="6 7 9 10">Expressed in a subset of dorsal root ganglia neurons (PubMed:16926070, PubMed:24373353, PubMed:25381841). Expressed in spinal cord and trigeminal ganglion (at protein level) (PubMed:25381841). Expressed in skin, testis, bone marrow and thymus (PubMed:15184896).</text>
</comment>
<comment type="developmental stage">
    <text evidence="7">Primarily expressed at postnatal day 10 in the dorsal root ganglia where expression gradually increases as the development proceed.</text>
</comment>
<comment type="induction">
    <text evidence="6 10 11">Up-regulated in the diseased tissues of a mouse models of allergic asthma and airway hypersensitivity (PubMed:15184896, PubMed:25847241). Up-regulated by IL31 in dorsal root ganglia (PubMed:25381841). Up-regulated by Th2 cytokines IL4 and IL13 in macrophages (PubMed:25847241).</text>
</comment>
<comment type="PTM">
    <text evidence="2">N-glycosylated.</text>
</comment>
<comment type="disruption phenotype">
    <text evidence="6 8">Mice do not develop dermatitis upon Il31 overexpression (PubMed:15184896). Decreased levels of immature myeloid progenitor cells in bone marrow and spleen but normal numbers of circulating blood cells (PubMed:17379091).</text>
</comment>
<comment type="similarity">
    <text evidence="15">Belongs to the type I cytokine receptor family. Type 2 subfamily.</text>
</comment>
<reference key="1">
    <citation type="journal article" date="2002" name="J. Biol. Chem.">
        <title>A novel type I cytokine receptor is expressed on monocytes, signals proliferation, and activates STAT-3 and STAT-5.</title>
        <authorList>
            <person name="Ghilardi N."/>
            <person name="Li J."/>
            <person name="Hongo J.-A."/>
            <person name="Yi S."/>
            <person name="Gurney A."/>
            <person name="De Sauvage F.J."/>
        </authorList>
    </citation>
    <scope>NUCLEOTIDE SEQUENCE [MRNA] (ISOFORM 1)</scope>
    <source>
        <tissue>Spleen</tissue>
    </source>
</reference>
<reference key="2">
    <citation type="journal article" date="2004" name="Nat. Immunol.">
        <title>Interleukin 31, a cytokine produced by activated T cells, induces dermatitis in mice.</title>
        <authorList>
            <person name="Dillon S.R."/>
            <person name="Sprecher C."/>
            <person name="Hammond A."/>
            <person name="Bilsborough J."/>
            <person name="Rosenfeld-Franklin M."/>
            <person name="Presnell S.R."/>
            <person name="Haugen H.S."/>
            <person name="Maurer M."/>
            <person name="Harder B."/>
            <person name="Johnston J."/>
            <person name="Bort S."/>
            <person name="Mudri S."/>
            <person name="Kuijper J.L."/>
            <person name="Bukowski T."/>
            <person name="Shea P."/>
            <person name="Dong D.L."/>
            <person name="Dasovich M."/>
            <person name="Grant F.J."/>
            <person name="Lockwood L."/>
            <person name="Levin S.D."/>
            <person name="LeCiel C."/>
            <person name="Waggie K."/>
            <person name="Day H."/>
            <person name="Topouzis S."/>
            <person name="Kramer J."/>
            <person name="Kuestner R."/>
            <person name="Chen Z."/>
            <person name="Foster D."/>
            <person name="Parrish-Novak J."/>
            <person name="Gross J.A."/>
        </authorList>
    </citation>
    <scope>NUCLEOTIDE SEQUENCE [MRNA] (ISOFORMS 2 AND 3)</scope>
    <scope>FUNCTION</scope>
    <scope>INDUCTION</scope>
    <scope>TISSUE SPECIFICITY</scope>
    <scope>DISRUPTION PHENOTYPE</scope>
    <source>
        <strain>BALB/cJ</strain>
        <tissue>Testis</tissue>
    </source>
</reference>
<reference key="3">
    <citation type="submission" date="2002-04" db="EMBL/GenBank/DDBJ databases">
        <title>Polymorphism between C57BL/6 and Balb/c in the novel cytokine receptor NR10.</title>
        <authorList>
            <person name="Nomura H."/>
            <person name="Yaguchi N."/>
            <person name="Maeda M."/>
            <person name="Hasegawa M."/>
        </authorList>
    </citation>
    <scope>NUCLEOTIDE SEQUENCE [MRNA] (ISOFORM 1)</scope>
    <source>
        <strain>C57BL/6J</strain>
    </source>
</reference>
<reference key="4">
    <citation type="journal article" date="2005" name="Science">
        <title>The transcriptional landscape of the mammalian genome.</title>
        <authorList>
            <person name="Carninci P."/>
            <person name="Kasukawa T."/>
            <person name="Katayama S."/>
            <person name="Gough J."/>
            <person name="Frith M.C."/>
            <person name="Maeda N."/>
            <person name="Oyama R."/>
            <person name="Ravasi T."/>
            <person name="Lenhard B."/>
            <person name="Wells C."/>
            <person name="Kodzius R."/>
            <person name="Shimokawa K."/>
            <person name="Bajic V.B."/>
            <person name="Brenner S.E."/>
            <person name="Batalov S."/>
            <person name="Forrest A.R."/>
            <person name="Zavolan M."/>
            <person name="Davis M.J."/>
            <person name="Wilming L.G."/>
            <person name="Aidinis V."/>
            <person name="Allen J.E."/>
            <person name="Ambesi-Impiombato A."/>
            <person name="Apweiler R."/>
            <person name="Aturaliya R.N."/>
            <person name="Bailey T.L."/>
            <person name="Bansal M."/>
            <person name="Baxter L."/>
            <person name="Beisel K.W."/>
            <person name="Bersano T."/>
            <person name="Bono H."/>
            <person name="Chalk A.M."/>
            <person name="Chiu K.P."/>
            <person name="Choudhary V."/>
            <person name="Christoffels A."/>
            <person name="Clutterbuck D.R."/>
            <person name="Crowe M.L."/>
            <person name="Dalla E."/>
            <person name="Dalrymple B.P."/>
            <person name="de Bono B."/>
            <person name="Della Gatta G."/>
            <person name="di Bernardo D."/>
            <person name="Down T."/>
            <person name="Engstrom P."/>
            <person name="Fagiolini M."/>
            <person name="Faulkner G."/>
            <person name="Fletcher C.F."/>
            <person name="Fukushima T."/>
            <person name="Furuno M."/>
            <person name="Futaki S."/>
            <person name="Gariboldi M."/>
            <person name="Georgii-Hemming P."/>
            <person name="Gingeras T.R."/>
            <person name="Gojobori T."/>
            <person name="Green R.E."/>
            <person name="Gustincich S."/>
            <person name="Harbers M."/>
            <person name="Hayashi Y."/>
            <person name="Hensch T.K."/>
            <person name="Hirokawa N."/>
            <person name="Hill D."/>
            <person name="Huminiecki L."/>
            <person name="Iacono M."/>
            <person name="Ikeo K."/>
            <person name="Iwama A."/>
            <person name="Ishikawa T."/>
            <person name="Jakt M."/>
            <person name="Kanapin A."/>
            <person name="Katoh M."/>
            <person name="Kawasawa Y."/>
            <person name="Kelso J."/>
            <person name="Kitamura H."/>
            <person name="Kitano H."/>
            <person name="Kollias G."/>
            <person name="Krishnan S.P."/>
            <person name="Kruger A."/>
            <person name="Kummerfeld S.K."/>
            <person name="Kurochkin I.V."/>
            <person name="Lareau L.F."/>
            <person name="Lazarevic D."/>
            <person name="Lipovich L."/>
            <person name="Liu J."/>
            <person name="Liuni S."/>
            <person name="McWilliam S."/>
            <person name="Madan Babu M."/>
            <person name="Madera M."/>
            <person name="Marchionni L."/>
            <person name="Matsuda H."/>
            <person name="Matsuzawa S."/>
            <person name="Miki H."/>
            <person name="Mignone F."/>
            <person name="Miyake S."/>
            <person name="Morris K."/>
            <person name="Mottagui-Tabar S."/>
            <person name="Mulder N."/>
            <person name="Nakano N."/>
            <person name="Nakauchi H."/>
            <person name="Ng P."/>
            <person name="Nilsson R."/>
            <person name="Nishiguchi S."/>
            <person name="Nishikawa S."/>
            <person name="Nori F."/>
            <person name="Ohara O."/>
            <person name="Okazaki Y."/>
            <person name="Orlando V."/>
            <person name="Pang K.C."/>
            <person name="Pavan W.J."/>
            <person name="Pavesi G."/>
            <person name="Pesole G."/>
            <person name="Petrovsky N."/>
            <person name="Piazza S."/>
            <person name="Reed J."/>
            <person name="Reid J.F."/>
            <person name="Ring B.Z."/>
            <person name="Ringwald M."/>
            <person name="Rost B."/>
            <person name="Ruan Y."/>
            <person name="Salzberg S.L."/>
            <person name="Sandelin A."/>
            <person name="Schneider C."/>
            <person name="Schoenbach C."/>
            <person name="Sekiguchi K."/>
            <person name="Semple C.A."/>
            <person name="Seno S."/>
            <person name="Sessa L."/>
            <person name="Sheng Y."/>
            <person name="Shibata Y."/>
            <person name="Shimada H."/>
            <person name="Shimada K."/>
            <person name="Silva D."/>
            <person name="Sinclair B."/>
            <person name="Sperling S."/>
            <person name="Stupka E."/>
            <person name="Sugiura K."/>
            <person name="Sultana R."/>
            <person name="Takenaka Y."/>
            <person name="Taki K."/>
            <person name="Tammoja K."/>
            <person name="Tan S.L."/>
            <person name="Tang S."/>
            <person name="Taylor M.S."/>
            <person name="Tegner J."/>
            <person name="Teichmann S.A."/>
            <person name="Ueda H.R."/>
            <person name="van Nimwegen E."/>
            <person name="Verardo R."/>
            <person name="Wei C.L."/>
            <person name="Yagi K."/>
            <person name="Yamanishi H."/>
            <person name="Zabarovsky E."/>
            <person name="Zhu S."/>
            <person name="Zimmer A."/>
            <person name="Hide W."/>
            <person name="Bult C."/>
            <person name="Grimmond S.M."/>
            <person name="Teasdale R.D."/>
            <person name="Liu E.T."/>
            <person name="Brusic V."/>
            <person name="Quackenbush J."/>
            <person name="Wahlestedt C."/>
            <person name="Mattick J.S."/>
            <person name="Hume D.A."/>
            <person name="Kai C."/>
            <person name="Sasaki D."/>
            <person name="Tomaru Y."/>
            <person name="Fukuda S."/>
            <person name="Kanamori-Katayama M."/>
            <person name="Suzuki M."/>
            <person name="Aoki J."/>
            <person name="Arakawa T."/>
            <person name="Iida J."/>
            <person name="Imamura K."/>
            <person name="Itoh M."/>
            <person name="Kato T."/>
            <person name="Kawaji H."/>
            <person name="Kawagashira N."/>
            <person name="Kawashima T."/>
            <person name="Kojima M."/>
            <person name="Kondo S."/>
            <person name="Konno H."/>
            <person name="Nakano K."/>
            <person name="Ninomiya N."/>
            <person name="Nishio T."/>
            <person name="Okada M."/>
            <person name="Plessy C."/>
            <person name="Shibata K."/>
            <person name="Shiraki T."/>
            <person name="Suzuki S."/>
            <person name="Tagami M."/>
            <person name="Waki K."/>
            <person name="Watahiki A."/>
            <person name="Okamura-Oho Y."/>
            <person name="Suzuki H."/>
            <person name="Kawai J."/>
            <person name="Hayashizaki Y."/>
        </authorList>
    </citation>
    <scope>NUCLEOTIDE SEQUENCE [LARGE SCALE MRNA] (ISOFORM 5)</scope>
    <source>
        <strain>C57BL/6J</strain>
        <tissue>Pituitary</tissue>
    </source>
</reference>
<reference key="5">
    <citation type="journal article" date="2009" name="PLoS Biol.">
        <title>Lineage-specific biology revealed by a finished genome assembly of the mouse.</title>
        <authorList>
            <person name="Church D.M."/>
            <person name="Goodstadt L."/>
            <person name="Hillier L.W."/>
            <person name="Zody M.C."/>
            <person name="Goldstein S."/>
            <person name="She X."/>
            <person name="Bult C.J."/>
            <person name="Agarwala R."/>
            <person name="Cherry J.L."/>
            <person name="DiCuccio M."/>
            <person name="Hlavina W."/>
            <person name="Kapustin Y."/>
            <person name="Meric P."/>
            <person name="Maglott D."/>
            <person name="Birtle Z."/>
            <person name="Marques A.C."/>
            <person name="Graves T."/>
            <person name="Zhou S."/>
            <person name="Teague B."/>
            <person name="Potamousis K."/>
            <person name="Churas C."/>
            <person name="Place M."/>
            <person name="Herschleb J."/>
            <person name="Runnheim R."/>
            <person name="Forrest D."/>
            <person name="Amos-Landgraf J."/>
            <person name="Schwartz D.C."/>
            <person name="Cheng Z."/>
            <person name="Lindblad-Toh K."/>
            <person name="Eichler E.E."/>
            <person name="Ponting C.P."/>
        </authorList>
    </citation>
    <scope>NUCLEOTIDE SEQUENCE [LARGE SCALE GENOMIC DNA]</scope>
    <source>
        <strain>C57BL/6J</strain>
    </source>
</reference>
<reference key="6">
    <citation type="journal article" date="2004" name="Genome Res.">
        <title>The status, quality, and expansion of the NIH full-length cDNA project: the Mammalian Gene Collection (MGC).</title>
        <authorList>
            <consortium name="The MGC Project Team"/>
        </authorList>
    </citation>
    <scope>NUCLEOTIDE SEQUENCE [LARGE SCALE MRNA] (ISOFORM 4)</scope>
    <source>
        <strain>C57BL/6J</strain>
        <tissue>Egg</tissue>
    </source>
</reference>
<reference key="7">
    <citation type="journal article" date="2006" name="Neuroscience">
        <title>Complete overlap of interleukin-31 receptor A and oncostatin M receptor beta in the adult dorsal root ganglia with distinct developmental expression patterns.</title>
        <authorList>
            <person name="Bando T."/>
            <person name="Morikawa Y."/>
            <person name="Komori T."/>
            <person name="Senba E."/>
        </authorList>
    </citation>
    <scope>TISSUE SPECIFICITY</scope>
    <scope>DEVELOPMENTAL STAGE</scope>
</reference>
<reference key="8">
    <citation type="journal article" date="2007" name="Exp. Hematol.">
        <title>Regulation of myeloid progenitor cell proliferation/survival by IL-31 receptor and IL-31.</title>
        <authorList>
            <person name="Broxmeyer H.E."/>
            <person name="Li J."/>
            <person name="Hangoc G."/>
            <person name="Cooper S."/>
            <person name="Tao W."/>
            <person name="Mantel C."/>
            <person name="Graham-Evans B."/>
            <person name="Ghilardi N."/>
            <person name="de Sauvage F.J."/>
        </authorList>
    </citation>
    <scope>FUNCTION</scope>
    <scope>DISRUPTION PHENOTYPE</scope>
</reference>
<reference key="9">
    <citation type="journal article" date="2014" name="J. Allergy Clin. Immunol.">
        <title>A sensory neuron-expressed IL-31 receptor mediates T helper cell-dependent itch: Involvement of TRPV1 and TRPA1.</title>
        <authorList>
            <person name="Cevikbas F."/>
            <person name="Wang X."/>
            <person name="Akiyama T."/>
            <person name="Kempkes C."/>
            <person name="Savinko T."/>
            <person name="Antal A."/>
            <person name="Kukova G."/>
            <person name="Buhl T."/>
            <person name="Ikoma A."/>
            <person name="Buddenkotte J."/>
            <person name="Soumelis V."/>
            <person name="Feld M."/>
            <person name="Alenius H."/>
            <person name="Dillon S.R."/>
            <person name="Carstens E."/>
            <person name="Homey B."/>
            <person name="Basbaum A."/>
            <person name="Steinhoff M."/>
        </authorList>
    </citation>
    <scope>FUNCTION</scope>
    <scope>TISSUE SPECIFICITY</scope>
</reference>
<reference key="10">
    <citation type="journal article" date="2015" name="Exp. Dermatol.">
        <title>Repeated administration of IL-31 upregulates IL-31 receptor A (IL-31RA) in dorsal root ganglia and causes severe itch-associated scratching behaviour in mice.</title>
        <authorList>
            <person name="Arai I."/>
            <person name="Tsuji M."/>
            <person name="Miyagawa K."/>
            <person name="Takeda H."/>
            <person name="Akiyama N."/>
            <person name="Saito S."/>
        </authorList>
    </citation>
    <scope>SUBCELLULAR LOCATION</scope>
    <scope>TISSUE SPECIFICITY</scope>
    <scope>INDUCTION</scope>
</reference>
<reference key="11">
    <citation type="journal article" date="2015" name="J. Biol. Chem.">
        <title>Th2 Cytokines Augment IL-31/IL-31RA Interactions via STAT6-dependent IL-31RA Expression.</title>
        <authorList>
            <person name="Edukulla R."/>
            <person name="Singh B."/>
            <person name="Jegga A.G."/>
            <person name="Sontake V."/>
            <person name="Dillon S.R."/>
            <person name="Madala S.K."/>
        </authorList>
    </citation>
    <scope>SUBCELLULAR LOCATION</scope>
    <scope>INDUCTION</scope>
</reference>
<keyword id="KW-0025">Alternative splicing</keyword>
<keyword id="KW-1003">Cell membrane</keyword>
<keyword id="KW-0966">Cell projection</keyword>
<keyword id="KW-0325">Glycoprotein</keyword>
<keyword id="KW-0391">Immunity</keyword>
<keyword id="KW-0472">Membrane</keyword>
<keyword id="KW-0675">Receptor</keyword>
<keyword id="KW-1185">Reference proteome</keyword>
<keyword id="KW-0677">Repeat</keyword>
<keyword id="KW-0732">Signal</keyword>
<keyword id="KW-0770">Synapse</keyword>
<keyword id="KW-0812">Transmembrane</keyword>
<keyword id="KW-1133">Transmembrane helix</keyword>
<name>IL31R_MOUSE</name>
<dbReference type="EMBL" id="AF486621">
    <property type="protein sequence ID" value="AAM27959.1"/>
    <property type="molecule type" value="mRNA"/>
</dbReference>
<dbReference type="EMBL" id="AY509150">
    <property type="protein sequence ID" value="AAS82847.1"/>
    <property type="molecule type" value="mRNA"/>
</dbReference>
<dbReference type="EMBL" id="AY509151">
    <property type="protein sequence ID" value="AAS82848.1"/>
    <property type="molecule type" value="mRNA"/>
</dbReference>
<dbReference type="EMBL" id="AB083111">
    <property type="protein sequence ID" value="BAB88745.1"/>
    <property type="molecule type" value="mRNA"/>
</dbReference>
<dbReference type="EMBL" id="AK030512">
    <property type="protein sequence ID" value="BAC26998.1"/>
    <property type="molecule type" value="mRNA"/>
</dbReference>
<dbReference type="EMBL" id="AC154767">
    <property type="status" value="NOT_ANNOTATED_CDS"/>
    <property type="molecule type" value="Genomic_DNA"/>
</dbReference>
<dbReference type="EMBL" id="AC159196">
    <property type="status" value="NOT_ANNOTATED_CDS"/>
    <property type="molecule type" value="Genomic_DNA"/>
</dbReference>
<dbReference type="EMBL" id="BC066164">
    <property type="protein sequence ID" value="AAH66164.1"/>
    <property type="molecule type" value="mRNA"/>
</dbReference>
<dbReference type="CCDS" id="CCDS36781.1">
    <molecule id="Q8K5B1-1"/>
</dbReference>
<dbReference type="RefSeq" id="NP_647460.2">
    <molecule id="Q8K5B1-1"/>
    <property type="nucleotide sequence ID" value="NM_139299.2"/>
</dbReference>
<dbReference type="RefSeq" id="XP_006517684.1">
    <molecule id="Q8K5B1-1"/>
    <property type="nucleotide sequence ID" value="XM_006517621.4"/>
</dbReference>
<dbReference type="RefSeq" id="XP_017170988.1">
    <molecule id="Q8K5B1-1"/>
    <property type="nucleotide sequence ID" value="XM_017315499.3"/>
</dbReference>
<dbReference type="SMR" id="Q8K5B1"/>
<dbReference type="FunCoup" id="Q8K5B1">
    <property type="interactions" value="367"/>
</dbReference>
<dbReference type="STRING" id="10090.ENSMUSP00000058045"/>
<dbReference type="GlyCosmos" id="Q8K5B1">
    <property type="glycosylation" value="4 sites, No reported glycans"/>
</dbReference>
<dbReference type="GlyGen" id="Q8K5B1">
    <property type="glycosylation" value="4 sites, 1 N-linked glycan (1 site)"/>
</dbReference>
<dbReference type="iPTMnet" id="Q8K5B1"/>
<dbReference type="PhosphoSitePlus" id="Q8K5B1"/>
<dbReference type="PaxDb" id="10090-ENSMUSP00000058045"/>
<dbReference type="ProteomicsDB" id="267041">
    <molecule id="Q8K5B1-1"/>
</dbReference>
<dbReference type="ProteomicsDB" id="267042">
    <molecule id="Q8K5B1-2"/>
</dbReference>
<dbReference type="ProteomicsDB" id="267043">
    <molecule id="Q8K5B1-3"/>
</dbReference>
<dbReference type="ProteomicsDB" id="267044">
    <molecule id="Q8K5B1-4"/>
</dbReference>
<dbReference type="Antibodypedia" id="23449">
    <property type="antibodies" value="327 antibodies from 27 providers"/>
</dbReference>
<dbReference type="DNASU" id="218624"/>
<dbReference type="Ensembl" id="ENSMUST00000051756.8">
    <molecule id="Q8K5B1-1"/>
    <property type="protein sequence ID" value="ENSMUSP00000058045.7"/>
    <property type="gene ID" value="ENSMUSG00000050377.9"/>
</dbReference>
<dbReference type="GeneID" id="218624"/>
<dbReference type="KEGG" id="mmu:218624"/>
<dbReference type="UCSC" id="uc007rwi.2">
    <molecule id="Q8K5B1-1"/>
    <property type="organism name" value="mouse"/>
</dbReference>
<dbReference type="UCSC" id="uc007rwj.1">
    <molecule id="Q8K5B1-3"/>
    <property type="organism name" value="mouse"/>
</dbReference>
<dbReference type="AGR" id="MGI:2180511"/>
<dbReference type="CTD" id="133396"/>
<dbReference type="MGI" id="MGI:2180511">
    <property type="gene designation" value="Il31ra"/>
</dbReference>
<dbReference type="VEuPathDB" id="HostDB:ENSMUSG00000050377"/>
<dbReference type="eggNOG" id="ENOG502QVZY">
    <property type="taxonomic scope" value="Eukaryota"/>
</dbReference>
<dbReference type="GeneTree" id="ENSGT00940000155603"/>
<dbReference type="HOGENOM" id="CLU_017990_2_0_1"/>
<dbReference type="InParanoid" id="Q8K5B1"/>
<dbReference type="OMA" id="NSTHWME"/>
<dbReference type="OrthoDB" id="9828391at2759"/>
<dbReference type="PhylomeDB" id="Q8K5B1"/>
<dbReference type="TreeFam" id="TF338122"/>
<dbReference type="Reactome" id="R-MMU-6788467">
    <property type="pathway name" value="IL-6-type cytokine receptor ligand interactions"/>
</dbReference>
<dbReference type="BioGRID-ORCS" id="218624">
    <property type="hits" value="3 hits in 79 CRISPR screens"/>
</dbReference>
<dbReference type="ChiTaRS" id="Il31ra">
    <property type="organism name" value="mouse"/>
</dbReference>
<dbReference type="PRO" id="PR:Q8K5B1"/>
<dbReference type="Proteomes" id="UP000000589">
    <property type="component" value="Chromosome 13"/>
</dbReference>
<dbReference type="RNAct" id="Q8K5B1">
    <property type="molecule type" value="protein"/>
</dbReference>
<dbReference type="Bgee" id="ENSMUSG00000050377">
    <property type="expression patterns" value="Expressed in lumbar dorsal root ganglion and 34 other cell types or tissues"/>
</dbReference>
<dbReference type="ExpressionAtlas" id="Q8K5B1">
    <property type="expression patterns" value="baseline and differential"/>
</dbReference>
<dbReference type="GO" id="GO:0030424">
    <property type="term" value="C:axon"/>
    <property type="evidence" value="ECO:0007669"/>
    <property type="project" value="UniProtKB-SubCell"/>
</dbReference>
<dbReference type="GO" id="GO:0009897">
    <property type="term" value="C:external side of plasma membrane"/>
    <property type="evidence" value="ECO:0000314"/>
    <property type="project" value="MGI"/>
</dbReference>
<dbReference type="GO" id="GO:0016020">
    <property type="term" value="C:membrane"/>
    <property type="evidence" value="ECO:0000266"/>
    <property type="project" value="MGI"/>
</dbReference>
<dbReference type="GO" id="GO:0042734">
    <property type="term" value="C:presynaptic membrane"/>
    <property type="evidence" value="ECO:0007669"/>
    <property type="project" value="UniProtKB-SubCell"/>
</dbReference>
<dbReference type="GO" id="GO:0019955">
    <property type="term" value="F:cytokine binding"/>
    <property type="evidence" value="ECO:0000353"/>
    <property type="project" value="MGI"/>
</dbReference>
<dbReference type="GO" id="GO:0004896">
    <property type="term" value="F:cytokine receptor activity"/>
    <property type="evidence" value="ECO:0000266"/>
    <property type="project" value="MGI"/>
</dbReference>
<dbReference type="GO" id="GO:0002438">
    <property type="term" value="P:acute inflammatory response to antigenic stimulus"/>
    <property type="evidence" value="ECO:0000315"/>
    <property type="project" value="MGI"/>
</dbReference>
<dbReference type="GO" id="GO:0007259">
    <property type="term" value="P:cell surface receptor signaling pathway via JAK-STAT"/>
    <property type="evidence" value="ECO:0000250"/>
    <property type="project" value="UniProtKB"/>
</dbReference>
<dbReference type="GO" id="GO:0098542">
    <property type="term" value="P:defense response to other organism"/>
    <property type="evidence" value="ECO:0000315"/>
    <property type="project" value="MGI"/>
</dbReference>
<dbReference type="GO" id="GO:0002067">
    <property type="term" value="P:glandular epithelial cell differentiation"/>
    <property type="evidence" value="ECO:0000315"/>
    <property type="project" value="MGI"/>
</dbReference>
<dbReference type="GO" id="GO:0030224">
    <property type="term" value="P:monocyte differentiation"/>
    <property type="evidence" value="ECO:0000250"/>
    <property type="project" value="UniProtKB"/>
</dbReference>
<dbReference type="GO" id="GO:0008284">
    <property type="term" value="P:positive regulation of cell population proliferation"/>
    <property type="evidence" value="ECO:0000250"/>
    <property type="project" value="UniProtKB"/>
</dbReference>
<dbReference type="GO" id="GO:0042531">
    <property type="term" value="P:positive regulation of tyrosine phosphorylation of STAT protein"/>
    <property type="evidence" value="ECO:0000250"/>
    <property type="project" value="UniProtKB"/>
</dbReference>
<dbReference type="CDD" id="cd00063">
    <property type="entry name" value="FN3"/>
    <property type="match status" value="2"/>
</dbReference>
<dbReference type="FunFam" id="2.60.40.10:FF:000465">
    <property type="entry name" value="Granulocyte colony-stimulating factor receptor"/>
    <property type="match status" value="1"/>
</dbReference>
<dbReference type="FunFam" id="2.60.40.10:FF:000732">
    <property type="entry name" value="Interleukin 31 receptor A"/>
    <property type="match status" value="1"/>
</dbReference>
<dbReference type="FunFam" id="2.60.40.10:FF:000908">
    <property type="entry name" value="Interleukin 31 receptor A"/>
    <property type="match status" value="1"/>
</dbReference>
<dbReference type="FunFam" id="2.60.40.10:FF:000913">
    <property type="entry name" value="Interleukin 31 receptor A"/>
    <property type="match status" value="1"/>
</dbReference>
<dbReference type="FunFam" id="2.60.40.10:FF:000414">
    <property type="entry name" value="Interleukin-6 receptor subunit beta"/>
    <property type="match status" value="1"/>
</dbReference>
<dbReference type="Gene3D" id="2.60.40.10">
    <property type="entry name" value="Immunoglobulins"/>
    <property type="match status" value="5"/>
</dbReference>
<dbReference type="InterPro" id="IPR003961">
    <property type="entry name" value="FN3_dom"/>
</dbReference>
<dbReference type="InterPro" id="IPR036116">
    <property type="entry name" value="FN3_sf"/>
</dbReference>
<dbReference type="InterPro" id="IPR013783">
    <property type="entry name" value="Ig-like_fold"/>
</dbReference>
<dbReference type="InterPro" id="IPR052672">
    <property type="entry name" value="Type1_Cytokine_Rcpt_Type2"/>
</dbReference>
<dbReference type="PANTHER" id="PTHR48423">
    <property type="entry name" value="INTERLEUKIN-27 RECEPTOR SUBUNIT ALPHA"/>
    <property type="match status" value="1"/>
</dbReference>
<dbReference type="PANTHER" id="PTHR48423:SF1">
    <property type="entry name" value="INTERLEUKIN-27 RECEPTOR SUBUNIT ALPHA"/>
    <property type="match status" value="1"/>
</dbReference>
<dbReference type="Pfam" id="PF00041">
    <property type="entry name" value="fn3"/>
    <property type="match status" value="1"/>
</dbReference>
<dbReference type="SMART" id="SM00060">
    <property type="entry name" value="FN3"/>
    <property type="match status" value="4"/>
</dbReference>
<dbReference type="SUPFAM" id="SSF49265">
    <property type="entry name" value="Fibronectin type III"/>
    <property type="match status" value="3"/>
</dbReference>
<dbReference type="PROSITE" id="PS50853">
    <property type="entry name" value="FN3"/>
    <property type="match status" value="3"/>
</dbReference>
<sequence length="716" mass="80580">MWTLALWAFSFLCKFSLAVLPTKPENISCVFYFDRNLTCTWRPEKETNDTSYIVTLTYSYGKSNYSDNATEASYSFPRSCAMPPDICSVEVQAQNGDGKVKSDITYWHLISIAKTEPPIILSVNPICNRMFQIQWKPREKTRGFPLVCMLRFRTVNSSHWTEVNFENCKQVCNLTGLQAFTEYVLALRFRFNDSRYWSKWSKEETRVTMEEVPHVLDLWRILEPADMNGDRKVRLLWKKARGAPVLEKTFGYHIQYFAENSTNLTEINNITTQQYELLLMSQAHSVSVTSFNSLGKSQEAILRIPDVHEKTFQYIKSMKAYIAEPLLVVNWQSSIPAVDTWIVEWLPEAAMSKFPALSWESVSQVTNWTIEQDKLKPFTCYNISVYPVLGHRVGEPYSIQAYAKEGTPLKGPETRVENIGLRTATITWKEIPKSARNGFINNYTVFYQAEGGKELSKTVNSHALQCDLESLTRRTSYTVWVMASTRAGGTNGVRINFKTLSISVFEIVLLTSLVGGGLLLLSIKTVTFGLRKPNRLTPLCCPDVPNPAESSLATWLGDGFKKSNMKETGNSGDTEDVVLKPCPVPADLIDKLVVNFENFLEVVLTEEAGKGQASILGGEANEYVTSPSRPDGPPGKSFKEPSVLTEVASEDSHSTCSRMADEAYSELARQPSSSCQSPGLSPPREDQAQNPYLKNSVTTREFLVHENIPEHSKGEV</sequence>
<evidence type="ECO:0000250" key="1"/>
<evidence type="ECO:0000250" key="2">
    <source>
        <dbReference type="UniProtKB" id="Q8NI17"/>
    </source>
</evidence>
<evidence type="ECO:0000255" key="3"/>
<evidence type="ECO:0000255" key="4">
    <source>
        <dbReference type="PROSITE-ProRule" id="PRU00316"/>
    </source>
</evidence>
<evidence type="ECO:0000256" key="5">
    <source>
        <dbReference type="SAM" id="MobiDB-lite"/>
    </source>
</evidence>
<evidence type="ECO:0000269" key="6">
    <source>
    </source>
</evidence>
<evidence type="ECO:0000269" key="7">
    <source>
    </source>
</evidence>
<evidence type="ECO:0000269" key="8">
    <source>
    </source>
</evidence>
<evidence type="ECO:0000269" key="9">
    <source>
    </source>
</evidence>
<evidence type="ECO:0000269" key="10">
    <source>
    </source>
</evidence>
<evidence type="ECO:0000269" key="11">
    <source>
    </source>
</evidence>
<evidence type="ECO:0000303" key="12">
    <source>
    </source>
</evidence>
<evidence type="ECO:0000303" key="13">
    <source>
    </source>
</evidence>
<evidence type="ECO:0000303" key="14">
    <source>
    </source>
</evidence>
<evidence type="ECO:0000305" key="15"/>
<accession>Q8K5B1</accession>
<accession>E9QQ31</accession>
<accession>Q6EAL6</accession>
<accession>Q6EAL7</accession>
<accession>Q6NZF0</accession>
<accession>Q8BSU3</accession>
<accession>Q8R501</accession>
<protein>
    <recommendedName>
        <fullName>Interleukin-31 receptor subunit alpha</fullName>
        <shortName>IL-31 receptor subunit alpha</shortName>
        <shortName>IL-31R subunit alpha</shortName>
        <shortName>IL-31R-alpha</shortName>
        <shortName>IL-31RA</shortName>
    </recommendedName>
    <alternativeName>
        <fullName>GLM-R</fullName>
        <shortName>mGLM-R</shortName>
    </alternativeName>
    <alternativeName>
        <fullName>Gp130-like monocyte receptor</fullName>
        <shortName>Gp130-like receptor</shortName>
    </alternativeName>
    <alternativeName>
        <fullName>Novel cytokine receptor 10</fullName>
        <shortName>NR10</shortName>
    </alternativeName>
    <alternativeName>
        <fullName>ZcytoR17</fullName>
    </alternativeName>
</protein>
<feature type="signal peptide" evidence="1">
    <location>
        <begin position="1"/>
        <end position="18"/>
    </location>
</feature>
<feature type="chain" id="PRO_0000274573" description="Interleukin-31 receptor subunit alpha">
    <location>
        <begin position="19"/>
        <end position="716"/>
    </location>
</feature>
<feature type="topological domain" description="Extracellular" evidence="3">
    <location>
        <begin position="19"/>
        <end position="499"/>
    </location>
</feature>
<feature type="transmembrane region" description="Helical" evidence="3">
    <location>
        <begin position="500"/>
        <end position="520"/>
    </location>
</feature>
<feature type="topological domain" description="Cytoplasmic" evidence="3">
    <location>
        <begin position="521"/>
        <end position="716"/>
    </location>
</feature>
<feature type="domain" description="Fibronectin type-III 1" evidence="4">
    <location>
        <begin position="23"/>
        <end position="115"/>
    </location>
</feature>
<feature type="domain" description="Fibronectin type-III 2" evidence="4">
    <location>
        <begin position="117"/>
        <end position="211"/>
    </location>
</feature>
<feature type="domain" description="Fibronectin type-III 3" evidence="4">
    <location>
        <begin position="213"/>
        <end position="304"/>
    </location>
</feature>
<feature type="domain" description="Fibronectin type-III 4" evidence="4">
    <location>
        <begin position="305"/>
        <end position="403"/>
    </location>
</feature>
<feature type="domain" description="Fibronectin type-III 5" evidence="4">
    <location>
        <begin position="408"/>
        <end position="502"/>
    </location>
</feature>
<feature type="region of interest" description="Disordered" evidence="5">
    <location>
        <begin position="622"/>
        <end position="641"/>
    </location>
</feature>
<feature type="region of interest" description="Disordered" evidence="5">
    <location>
        <begin position="648"/>
        <end position="696"/>
    </location>
</feature>
<feature type="compositionally biased region" description="Polar residues" evidence="5">
    <location>
        <begin position="670"/>
        <end position="679"/>
    </location>
</feature>
<feature type="glycosylation site" description="N-linked (GlcNAc...) asparagine" evidence="3">
    <location>
        <position position="36"/>
    </location>
</feature>
<feature type="glycosylation site" description="N-linked (GlcNAc...) asparagine" evidence="3">
    <location>
        <position position="48"/>
    </location>
</feature>
<feature type="glycosylation site" description="N-linked (GlcNAc...) asparagine" evidence="3">
    <location>
        <position position="64"/>
    </location>
</feature>
<feature type="glycosylation site" description="N-linked (GlcNAc...) asparagine" evidence="3">
    <location>
        <position position="382"/>
    </location>
</feature>
<feature type="splice variant" id="VSP_022814" description="In isoform 5." evidence="14">
    <location>
        <begin position="1"/>
        <end position="481"/>
    </location>
</feature>
<feature type="splice variant" id="VSP_022815" description="In isoform 2 and isoform 3." evidence="12">
    <original>M</original>
    <variation>MLSSQKGSCSQEPGAAHVQPLGVNAGIM</variation>
    <location>
        <position position="1"/>
    </location>
</feature>
<feature type="splice variant" id="VSP_022816" description="In isoform 4." evidence="13">
    <original>M</original>
    <variation>MNPLGVNAGIM</variation>
    <location>
        <position position="1"/>
    </location>
</feature>
<feature type="splice variant" id="VSP_022817" description="In isoform 4." evidence="13">
    <original>ALQCDLESLTRRTSYTVWVM</original>
    <variation>SPQVYYALTAAKSRNSRNLQ</variation>
    <location>
        <begin position="463"/>
        <end position="482"/>
    </location>
</feature>
<feature type="splice variant" id="VSP_022818" description="In isoform 4." evidence="13">
    <location>
        <begin position="483"/>
        <end position="716"/>
    </location>
</feature>
<feature type="splice variant" id="VSP_022819" description="In isoform 3." evidence="12">
    <original>VFEIVLLTSLVGGGLLL</original>
    <variation>EYWLQASFWSLLRVGNV</variation>
    <location>
        <begin position="504"/>
        <end position="520"/>
    </location>
</feature>
<feature type="splice variant" id="VSP_022820" description="In isoform 3." evidence="12">
    <location>
        <begin position="521"/>
        <end position="716"/>
    </location>
</feature>
<feature type="splice variant" id="VSP_022821" description="In isoform 2." evidence="12">
    <original>VTSPSRPDGPPG</original>
    <variation>ILSQEPSCPGHC</variation>
    <location>
        <begin position="624"/>
        <end position="635"/>
    </location>
</feature>
<feature type="splice variant" id="VSP_022822" description="In isoform 2." evidence="12">
    <location>
        <begin position="636"/>
        <end position="716"/>
    </location>
</feature>
<feature type="sequence conflict" description="In Ref. 1; AAM27959, 2; AAS82847/AAS82848 and 3; BAB88745." evidence="15" ref="1 2 3">
    <original>H</original>
    <variation>R</variation>
    <location>
        <position position="159"/>
    </location>
</feature>
<feature type="sequence conflict" description="In Ref. 1; AAM27959 and 2; AAS82847/AAS82848." evidence="15" ref="1 2">
    <original>A</original>
    <variation>T</variation>
    <location>
        <position position="300"/>
    </location>
</feature>
<feature type="sequence conflict" description="In Ref. 1; AAM27959 and 2; AAS82847/AAS82848." evidence="15" ref="1 2">
    <original>K</original>
    <variation>Q</variation>
    <location>
        <position position="319"/>
    </location>
</feature>
<feature type="sequence conflict" description="In Ref. 1; AAM27959 and 2; AAS82847." evidence="15" ref="1 2">
    <original>D</original>
    <variation>N</variation>
    <location>
        <position position="573"/>
    </location>
</feature>
<feature type="sequence conflict" description="In Ref. 1; AAM27959." evidence="15" ref="1">
    <original>V</original>
    <variation>I</variation>
    <location>
        <position position="643"/>
    </location>
</feature>
<organism>
    <name type="scientific">Mus musculus</name>
    <name type="common">Mouse</name>
    <dbReference type="NCBI Taxonomy" id="10090"/>
    <lineage>
        <taxon>Eukaryota</taxon>
        <taxon>Metazoa</taxon>
        <taxon>Chordata</taxon>
        <taxon>Craniata</taxon>
        <taxon>Vertebrata</taxon>
        <taxon>Euteleostomi</taxon>
        <taxon>Mammalia</taxon>
        <taxon>Eutheria</taxon>
        <taxon>Euarchontoglires</taxon>
        <taxon>Glires</taxon>
        <taxon>Rodentia</taxon>
        <taxon>Myomorpha</taxon>
        <taxon>Muroidea</taxon>
        <taxon>Muridae</taxon>
        <taxon>Murinae</taxon>
        <taxon>Mus</taxon>
        <taxon>Mus</taxon>
    </lineage>
</organism>